<keyword id="KW-0150">Chloroplast</keyword>
<keyword id="KW-0249">Electron transport</keyword>
<keyword id="KW-0349">Heme</keyword>
<keyword id="KW-0408">Iron</keyword>
<keyword id="KW-0472">Membrane</keyword>
<keyword id="KW-0479">Metal-binding</keyword>
<keyword id="KW-0602">Photosynthesis</keyword>
<keyword id="KW-0934">Plastid</keyword>
<keyword id="KW-1185">Reference proteome</keyword>
<keyword id="KW-0732">Signal</keyword>
<keyword id="KW-0793">Thylakoid</keyword>
<keyword id="KW-0812">Transmembrane</keyword>
<keyword id="KW-1133">Transmembrane helix</keyword>
<keyword id="KW-0813">Transport</keyword>
<feature type="signal peptide" evidence="2">
    <location>
        <begin position="1"/>
        <end position="35"/>
    </location>
</feature>
<feature type="chain" id="PRO_0000275451" description="Cytochrome f">
    <location>
        <begin position="36"/>
        <end position="320"/>
    </location>
</feature>
<feature type="transmembrane region" description="Helical" evidence="2">
    <location>
        <begin position="286"/>
        <end position="306"/>
    </location>
</feature>
<feature type="binding site" description="axial binding residue" evidence="2">
    <location>
        <position position="36"/>
    </location>
    <ligand>
        <name>heme</name>
        <dbReference type="ChEBI" id="CHEBI:30413"/>
    </ligand>
    <ligandPart>
        <name>Fe</name>
        <dbReference type="ChEBI" id="CHEBI:18248"/>
    </ligandPart>
</feature>
<feature type="binding site" description="covalent" evidence="2">
    <location>
        <position position="56"/>
    </location>
    <ligand>
        <name>heme</name>
        <dbReference type="ChEBI" id="CHEBI:30413"/>
    </ligand>
</feature>
<feature type="binding site" description="covalent" evidence="2">
    <location>
        <position position="59"/>
    </location>
    <ligand>
        <name>heme</name>
        <dbReference type="ChEBI" id="CHEBI:30413"/>
    </ligand>
</feature>
<feature type="binding site" description="axial binding residue" evidence="2">
    <location>
        <position position="60"/>
    </location>
    <ligand>
        <name>heme</name>
        <dbReference type="ChEBI" id="CHEBI:30413"/>
    </ligand>
    <ligandPart>
        <name>Fe</name>
        <dbReference type="ChEBI" id="CHEBI:18248"/>
    </ligandPart>
</feature>
<protein>
    <recommendedName>
        <fullName evidence="2">Cytochrome f</fullName>
    </recommendedName>
</protein>
<comment type="function">
    <text evidence="2">Component of the cytochrome b6-f complex, which mediates electron transfer between photosystem II (PSII) and photosystem I (PSI), cyclic electron flow around PSI, and state transitions.</text>
</comment>
<comment type="cofactor">
    <cofactor evidence="2">
        <name>heme</name>
        <dbReference type="ChEBI" id="CHEBI:30413"/>
    </cofactor>
    <text evidence="2">Binds 1 heme group covalently.</text>
</comment>
<comment type="subunit">
    <text evidence="1">The 4 large subunits of the cytochrome b6-f complex are cytochrome b6, subunit IV (17 kDa polypeptide, petD), cytochrome f and the Rieske protein, while the 4 small subunits are PetG, PetL, PetM and PetN. The complex functions as a dimer (By similarity).</text>
</comment>
<comment type="subcellular location">
    <subcellularLocation>
        <location evidence="2">Plastid</location>
        <location evidence="2">Chloroplast thylakoid membrane</location>
        <topology evidence="2">Single-pass membrane protein</topology>
    </subcellularLocation>
</comment>
<comment type="similarity">
    <text evidence="2">Belongs to the cytochrome f family.</text>
</comment>
<reference key="1">
    <citation type="journal article" date="2006" name="Theor. Appl. Genet.">
        <title>Complete chloroplast genome sequences of Solanum bulbocastanum, Solanum lycopersicum and comparative analyses with other Solanaceae genomes.</title>
        <authorList>
            <person name="Daniell H."/>
            <person name="Lee S.-B."/>
            <person name="Grevich J."/>
            <person name="Saski C."/>
            <person name="Quesada-Vargas T."/>
            <person name="Guda C."/>
            <person name="Tomkins J."/>
            <person name="Jansen R.K."/>
        </authorList>
    </citation>
    <scope>NUCLEOTIDE SEQUENCE [LARGE SCALE GENOMIC DNA]</scope>
    <source>
        <strain>cv. LA3023</strain>
    </source>
</reference>
<reference key="2">
    <citation type="journal article" date="2006" name="J. Mol. Evol.">
        <title>Sequence of the tomato chloroplast DNA and evolutionary comparison of solanaceous plastid genomes.</title>
        <authorList>
            <person name="Kahlau S."/>
            <person name="Aspinall S."/>
            <person name="Gray J.C."/>
            <person name="Bock R."/>
        </authorList>
    </citation>
    <scope>NUCLEOTIDE SEQUENCE [LARGE SCALE GENOMIC DNA]</scope>
    <source>
        <strain>cv. IPA-6</strain>
    </source>
</reference>
<gene>
    <name evidence="2" type="primary">petA</name>
</gene>
<sequence length="320" mass="35218">MQTRNAFSWLKKQITRSISVSLMIYILTRTSISSAYPIFAQQGYENPREATGRIVCANCHLANKPVEIEVPQAVLPDTVFEAVVRIPYDMQLKQVLANGKKGGLNVGAVLILPEGFELAPPDRISPEMKEKIGNLSFQSYRPNKTNILVVGPVPGKKYSEITFPILSPDPATKKDVHFLKYPIYVGGNRGRGQIYPDGNKSNNTVYNATAAGIVSKIIRKEKGGYEITITDASEGRQVVDIIPPGPELLVSEGESIKFDQPLTSNPNVGGFGQGDAEIVLQDPLRVQGLLFFLASVILAQIFLVLKKKQFEKVQLAEMNF</sequence>
<proteinExistence type="inferred from homology"/>
<name>CYF_SOLLC</name>
<geneLocation type="chloroplast"/>
<evidence type="ECO:0000250" key="1"/>
<evidence type="ECO:0000255" key="2">
    <source>
        <dbReference type="HAMAP-Rule" id="MF_00610"/>
    </source>
</evidence>
<dbReference type="EMBL" id="DQ347959">
    <property type="protein sequence ID" value="ABC56313.1"/>
    <property type="molecule type" value="Genomic_DNA"/>
</dbReference>
<dbReference type="EMBL" id="AM087200">
    <property type="protein sequence ID" value="CAJ32406.1"/>
    <property type="molecule type" value="Genomic_DNA"/>
</dbReference>
<dbReference type="RefSeq" id="AP_004941.1">
    <property type="nucleotide sequence ID" value="AC_000188.1"/>
</dbReference>
<dbReference type="RefSeq" id="XP_004228573.1">
    <property type="nucleotide sequence ID" value="XM_004228525.3"/>
</dbReference>
<dbReference type="RefSeq" id="YP_008563101.1">
    <property type="nucleotide sequence ID" value="NC_007898.3"/>
</dbReference>
<dbReference type="SMR" id="Q2MI87"/>
<dbReference type="FunCoup" id="Q2MI87">
    <property type="interactions" value="369"/>
</dbReference>
<dbReference type="STRING" id="4081.Q2MI87"/>
<dbReference type="PaxDb" id="4081-Solyc01g007380.1.1"/>
<dbReference type="GeneID" id="3950466"/>
<dbReference type="KEGG" id="sly:3950466"/>
<dbReference type="eggNOG" id="ENOG502QPT8">
    <property type="taxonomic scope" value="Eukaryota"/>
</dbReference>
<dbReference type="HOGENOM" id="CLU_033498_0_0_1"/>
<dbReference type="InParanoid" id="Q2MI87"/>
<dbReference type="OrthoDB" id="1251152at2759"/>
<dbReference type="PhylomeDB" id="Q2MI87"/>
<dbReference type="Proteomes" id="UP000004994">
    <property type="component" value="Chloroplast"/>
</dbReference>
<dbReference type="ExpressionAtlas" id="Q2MI87">
    <property type="expression patterns" value="baseline"/>
</dbReference>
<dbReference type="GO" id="GO:0009535">
    <property type="term" value="C:chloroplast thylakoid membrane"/>
    <property type="evidence" value="ECO:0007669"/>
    <property type="project" value="UniProtKB-SubCell"/>
</dbReference>
<dbReference type="GO" id="GO:0009055">
    <property type="term" value="F:electron transfer activity"/>
    <property type="evidence" value="ECO:0007669"/>
    <property type="project" value="UniProtKB-UniRule"/>
</dbReference>
<dbReference type="GO" id="GO:0020037">
    <property type="term" value="F:heme binding"/>
    <property type="evidence" value="ECO:0007669"/>
    <property type="project" value="InterPro"/>
</dbReference>
<dbReference type="GO" id="GO:0005506">
    <property type="term" value="F:iron ion binding"/>
    <property type="evidence" value="ECO:0007669"/>
    <property type="project" value="InterPro"/>
</dbReference>
<dbReference type="GO" id="GO:0015979">
    <property type="term" value="P:photosynthesis"/>
    <property type="evidence" value="ECO:0007669"/>
    <property type="project" value="UniProtKB-UniRule"/>
</dbReference>
<dbReference type="FunFam" id="1.20.5.700:FF:000001">
    <property type="entry name" value="Cytochrome f"/>
    <property type="match status" value="1"/>
</dbReference>
<dbReference type="FunFam" id="2.40.50.100:FF:000007">
    <property type="entry name" value="Cytochrome f"/>
    <property type="match status" value="1"/>
</dbReference>
<dbReference type="FunFam" id="2.60.40.830:FF:000001">
    <property type="entry name" value="Cytochrome f"/>
    <property type="match status" value="1"/>
</dbReference>
<dbReference type="Gene3D" id="2.40.50.100">
    <property type="match status" value="1"/>
</dbReference>
<dbReference type="Gene3D" id="2.60.40.830">
    <property type="entry name" value="Cytochrome f large domain"/>
    <property type="match status" value="1"/>
</dbReference>
<dbReference type="Gene3D" id="1.20.5.700">
    <property type="entry name" value="Single helix bin"/>
    <property type="match status" value="1"/>
</dbReference>
<dbReference type="HAMAP" id="MF_00610">
    <property type="entry name" value="Cytb6_f_cytF"/>
    <property type="match status" value="1"/>
</dbReference>
<dbReference type="InterPro" id="IPR024058">
    <property type="entry name" value="Cyt-f_TM"/>
</dbReference>
<dbReference type="InterPro" id="IPR002325">
    <property type="entry name" value="Cyt_f"/>
</dbReference>
<dbReference type="InterPro" id="IPR024094">
    <property type="entry name" value="Cyt_f_lg_dom"/>
</dbReference>
<dbReference type="InterPro" id="IPR036826">
    <property type="entry name" value="Cyt_f_lg_dom_sf"/>
</dbReference>
<dbReference type="InterPro" id="IPR011054">
    <property type="entry name" value="Rudment_hybrid_motif"/>
</dbReference>
<dbReference type="PANTHER" id="PTHR33288">
    <property type="match status" value="1"/>
</dbReference>
<dbReference type="PANTHER" id="PTHR33288:SF10">
    <property type="entry name" value="CYTOCHROME F"/>
    <property type="match status" value="1"/>
</dbReference>
<dbReference type="Pfam" id="PF01333">
    <property type="entry name" value="Apocytochr_F_C"/>
    <property type="match status" value="1"/>
</dbReference>
<dbReference type="Pfam" id="PF16639">
    <property type="entry name" value="Apocytochr_F_N"/>
    <property type="match status" value="1"/>
</dbReference>
<dbReference type="PRINTS" id="PR00610">
    <property type="entry name" value="CYTOCHROMEF"/>
</dbReference>
<dbReference type="SUPFAM" id="SSF103431">
    <property type="entry name" value="Cytochrome f subunit of the cytochrome b6f complex, transmembrane anchor"/>
    <property type="match status" value="1"/>
</dbReference>
<dbReference type="SUPFAM" id="SSF49441">
    <property type="entry name" value="Cytochrome f, large domain"/>
    <property type="match status" value="1"/>
</dbReference>
<dbReference type="SUPFAM" id="SSF51246">
    <property type="entry name" value="Rudiment single hybrid motif"/>
    <property type="match status" value="1"/>
</dbReference>
<dbReference type="PROSITE" id="PS51010">
    <property type="entry name" value="CYTF"/>
    <property type="match status" value="1"/>
</dbReference>
<accession>Q2MI87</accession>
<organism>
    <name type="scientific">Solanum lycopersicum</name>
    <name type="common">Tomato</name>
    <name type="synonym">Lycopersicon esculentum</name>
    <dbReference type="NCBI Taxonomy" id="4081"/>
    <lineage>
        <taxon>Eukaryota</taxon>
        <taxon>Viridiplantae</taxon>
        <taxon>Streptophyta</taxon>
        <taxon>Embryophyta</taxon>
        <taxon>Tracheophyta</taxon>
        <taxon>Spermatophyta</taxon>
        <taxon>Magnoliopsida</taxon>
        <taxon>eudicotyledons</taxon>
        <taxon>Gunneridae</taxon>
        <taxon>Pentapetalae</taxon>
        <taxon>asterids</taxon>
        <taxon>lamiids</taxon>
        <taxon>Solanales</taxon>
        <taxon>Solanaceae</taxon>
        <taxon>Solanoideae</taxon>
        <taxon>Solaneae</taxon>
        <taxon>Solanum</taxon>
        <taxon>Solanum subgen. Lycopersicon</taxon>
    </lineage>
</organism>